<reference key="1">
    <citation type="journal article" date="2000" name="Nature">
        <title>Sequence and analysis of chromosome 5 of the plant Arabidopsis thaliana.</title>
        <authorList>
            <person name="Tabata S."/>
            <person name="Kaneko T."/>
            <person name="Nakamura Y."/>
            <person name="Kotani H."/>
            <person name="Kato T."/>
            <person name="Asamizu E."/>
            <person name="Miyajima N."/>
            <person name="Sasamoto S."/>
            <person name="Kimura T."/>
            <person name="Hosouchi T."/>
            <person name="Kawashima K."/>
            <person name="Kohara M."/>
            <person name="Matsumoto M."/>
            <person name="Matsuno A."/>
            <person name="Muraki A."/>
            <person name="Nakayama S."/>
            <person name="Nakazaki N."/>
            <person name="Naruo K."/>
            <person name="Okumura S."/>
            <person name="Shinpo S."/>
            <person name="Takeuchi C."/>
            <person name="Wada T."/>
            <person name="Watanabe A."/>
            <person name="Yamada M."/>
            <person name="Yasuda M."/>
            <person name="Sato S."/>
            <person name="de la Bastide M."/>
            <person name="Huang E."/>
            <person name="Spiegel L."/>
            <person name="Gnoj L."/>
            <person name="O'Shaughnessy A."/>
            <person name="Preston R."/>
            <person name="Habermann K."/>
            <person name="Murray J."/>
            <person name="Johnson D."/>
            <person name="Rohlfing T."/>
            <person name="Nelson J."/>
            <person name="Stoneking T."/>
            <person name="Pepin K."/>
            <person name="Spieth J."/>
            <person name="Sekhon M."/>
            <person name="Armstrong J."/>
            <person name="Becker M."/>
            <person name="Belter E."/>
            <person name="Cordum H."/>
            <person name="Cordes M."/>
            <person name="Courtney L."/>
            <person name="Courtney W."/>
            <person name="Dante M."/>
            <person name="Du H."/>
            <person name="Edwards J."/>
            <person name="Fryman J."/>
            <person name="Haakensen B."/>
            <person name="Lamar E."/>
            <person name="Latreille P."/>
            <person name="Leonard S."/>
            <person name="Meyer R."/>
            <person name="Mulvaney E."/>
            <person name="Ozersky P."/>
            <person name="Riley A."/>
            <person name="Strowmatt C."/>
            <person name="Wagner-McPherson C."/>
            <person name="Wollam A."/>
            <person name="Yoakum M."/>
            <person name="Bell M."/>
            <person name="Dedhia N."/>
            <person name="Parnell L."/>
            <person name="Shah R."/>
            <person name="Rodriguez M."/>
            <person name="Hoon See L."/>
            <person name="Vil D."/>
            <person name="Baker J."/>
            <person name="Kirchoff K."/>
            <person name="Toth K."/>
            <person name="King L."/>
            <person name="Bahret A."/>
            <person name="Miller B."/>
            <person name="Marra M.A."/>
            <person name="Martienssen R."/>
            <person name="McCombie W.R."/>
            <person name="Wilson R.K."/>
            <person name="Murphy G."/>
            <person name="Bancroft I."/>
            <person name="Volckaert G."/>
            <person name="Wambutt R."/>
            <person name="Duesterhoeft A."/>
            <person name="Stiekema W."/>
            <person name="Pohl T."/>
            <person name="Entian K.-D."/>
            <person name="Terryn N."/>
            <person name="Hartley N."/>
            <person name="Bent E."/>
            <person name="Johnson S."/>
            <person name="Langham S.-A."/>
            <person name="McCullagh B."/>
            <person name="Robben J."/>
            <person name="Grymonprez B."/>
            <person name="Zimmermann W."/>
            <person name="Ramsperger U."/>
            <person name="Wedler H."/>
            <person name="Balke K."/>
            <person name="Wedler E."/>
            <person name="Peters S."/>
            <person name="van Staveren M."/>
            <person name="Dirkse W."/>
            <person name="Mooijman P."/>
            <person name="Klein Lankhorst R."/>
            <person name="Weitzenegger T."/>
            <person name="Bothe G."/>
            <person name="Rose M."/>
            <person name="Hauf J."/>
            <person name="Berneiser S."/>
            <person name="Hempel S."/>
            <person name="Feldpausch M."/>
            <person name="Lamberth S."/>
            <person name="Villarroel R."/>
            <person name="Gielen J."/>
            <person name="Ardiles W."/>
            <person name="Bents O."/>
            <person name="Lemcke K."/>
            <person name="Kolesov G."/>
            <person name="Mayer K.F.X."/>
            <person name="Rudd S."/>
            <person name="Schoof H."/>
            <person name="Schueller C."/>
            <person name="Zaccaria P."/>
            <person name="Mewes H.-W."/>
            <person name="Bevan M."/>
            <person name="Fransz P.F."/>
        </authorList>
    </citation>
    <scope>NUCLEOTIDE SEQUENCE [LARGE SCALE GENOMIC DNA]</scope>
    <source>
        <strain>cv. Columbia</strain>
    </source>
</reference>
<reference key="2">
    <citation type="journal article" date="2017" name="Plant J.">
        <title>Araport11: a complete reannotation of the Arabidopsis thaliana reference genome.</title>
        <authorList>
            <person name="Cheng C.Y."/>
            <person name="Krishnakumar V."/>
            <person name="Chan A.P."/>
            <person name="Thibaud-Nissen F."/>
            <person name="Schobel S."/>
            <person name="Town C.D."/>
        </authorList>
    </citation>
    <scope>GENOME REANNOTATION</scope>
    <source>
        <strain>cv. Columbia</strain>
    </source>
</reference>
<reference key="3">
    <citation type="submission" date="2002-12" db="EMBL/GenBank/DDBJ databases">
        <title>Arabidopsis open reading frame (ORF) clones.</title>
        <authorList>
            <person name="Yamada K."/>
            <person name="Chan M.M."/>
            <person name="Chang C.H."/>
            <person name="Dale J.M."/>
            <person name="Hsuan V.W."/>
            <person name="Lee J.M."/>
            <person name="Onodera C.S."/>
            <person name="Quach H.L."/>
            <person name="Tang C.C."/>
            <person name="Toriumi M."/>
            <person name="Wong C."/>
            <person name="Wu H.C."/>
            <person name="Yu G."/>
            <person name="Yuan S."/>
            <person name="Chen H."/>
            <person name="Cheuk R."/>
            <person name="Jones T."/>
            <person name="Kim C.J."/>
            <person name="Nguyen M."/>
            <person name="Palm C.J."/>
            <person name="Shinn P."/>
            <person name="Southwick A."/>
            <person name="Tripp M.G."/>
            <person name="Wu T."/>
            <person name="Davis R.W."/>
            <person name="Ecker J.R."/>
            <person name="Theologis A."/>
        </authorList>
    </citation>
    <scope>NUCLEOTIDE SEQUENCE [LARGE SCALE MRNA] (ISOFORM 1)</scope>
</reference>
<reference key="4">
    <citation type="submission" date="2002-03" db="EMBL/GenBank/DDBJ databases">
        <title>Full-length cDNA from Arabidopsis thaliana.</title>
        <authorList>
            <person name="Brover V.V."/>
            <person name="Troukhan M.E."/>
            <person name="Alexandrov N.A."/>
            <person name="Lu Y.-P."/>
            <person name="Flavell R.B."/>
            <person name="Feldmann K.A."/>
        </authorList>
    </citation>
    <scope>NUCLEOTIDE SEQUENCE [LARGE SCALE MRNA]</scope>
</reference>
<reference key="5">
    <citation type="journal article" date="2001" name="Genes Dev.">
        <title>A conserved MYB transcription factor involved in phosphate starvation signaling both in vascular plants and in unicellular algae.</title>
        <authorList>
            <person name="Rubio V."/>
            <person name="Linhares F."/>
            <person name="Solano R."/>
            <person name="Martin A.C."/>
            <person name="Iglesias J."/>
            <person name="Leyva A."/>
            <person name="Paz-Ares J."/>
        </authorList>
    </citation>
    <scope>GENE FAMILY</scope>
</reference>
<reference key="6">
    <citation type="journal article" date="2010" name="PLoS Genet.">
        <title>A central regulatory system largely controls transcriptional activation and repression responses to phosphate starvation in Arabidopsis.</title>
        <authorList>
            <person name="Bustos R."/>
            <person name="Castrillo G."/>
            <person name="Linhares F."/>
            <person name="Puga M.I."/>
            <person name="Rubio V."/>
            <person name="Perez-Perez J."/>
            <person name="Solano R."/>
            <person name="Leyva A."/>
            <person name="Paz-Ares J."/>
        </authorList>
    </citation>
    <scope>FUNCTION</scope>
    <scope>TISSUE SPECIFICITY</scope>
    <scope>DISRUPTION PHENOTYPE</scope>
    <scope>SUBUNIT</scope>
</reference>
<reference key="7">
    <citation type="journal article" date="2011" name="Mol. Plant">
        <title>A high-throughput screening system for Arabidopsis transcription factors and its application to Med25-dependent transcriptional regulation.</title>
        <authorList>
            <person name="Ou B."/>
            <person name="Yin K.Q."/>
            <person name="Liu S.N."/>
            <person name="Yang Y."/>
            <person name="Gu T."/>
            <person name="Wing Hui J.M."/>
            <person name="Zhang L."/>
            <person name="Miao J."/>
            <person name="Kondou Y."/>
            <person name="Matsui M."/>
            <person name="Gu H.Y."/>
            <person name="Qu L.J."/>
        </authorList>
    </citation>
    <scope>INTERACTION WITH MED25</scope>
</reference>
<reference key="8">
    <citation type="journal article" date="2011" name="Proc. Natl. Acad. Sci. U.S.A.">
        <title>The Arabidopsis thaliana Med25 mediator subunit integrates environmental cues to control plant development.</title>
        <authorList>
            <person name="Elfving N."/>
            <person name="Davoine C."/>
            <person name="Benlloch R."/>
            <person name="Blomberg J."/>
            <person name="Braennstroem K."/>
            <person name="Mueller D."/>
            <person name="Nilsson A."/>
            <person name="Ulfstedt M."/>
            <person name="Ronne H."/>
            <person name="Wingsle G."/>
            <person name="Nilsson O."/>
            <person name="Bjoerklund S."/>
        </authorList>
    </citation>
    <scope>INTERACTION WITH MED25</scope>
</reference>
<reference key="9">
    <citation type="journal article" date="2013" name="J. Biol. Chem.">
        <title>Arabidopsis ferritin 1 (AtFer1) gene regulation by the phosphate starvation response 1 (AtPHR1) transcription factor reveals a direct molecular link between iron and phosphate homeostasis.</title>
        <authorList>
            <person name="Bournier M."/>
            <person name="Tissot N."/>
            <person name="Mari S."/>
            <person name="Boucherez J."/>
            <person name="Lacombe E."/>
            <person name="Briat J.F."/>
            <person name="Gaymard F."/>
        </authorList>
    </citation>
    <scope>FUNCTION</scope>
</reference>
<reference key="10">
    <citation type="journal article" date="2016" name="Plant Physiol.">
        <title>Arabidopsis PHL2 and PHR1 act redundantly as the key components of the central regulatory system controlling transcriptional responses to phosphate starvation.</title>
        <authorList>
            <person name="Sun L."/>
            <person name="Song L."/>
            <person name="Zhang Y."/>
            <person name="Zheng Z."/>
            <person name="Liu D."/>
        </authorList>
    </citation>
    <scope>LACK OF INTERACTION WITH PHL2 OR PHL3</scope>
    <scope>LACK OF INDUCTION BY PHOSPHATE</scope>
</reference>
<accession>Q8GUN5</accession>
<accession>B3H6E5</accession>
<accession>F4KBG7</accession>
<accession>Q8LEY3</accession>
<name>PHL1_ARATH</name>
<keyword id="KW-0025">Alternative splicing</keyword>
<keyword id="KW-0175">Coiled coil</keyword>
<keyword id="KW-0539">Nucleus</keyword>
<keyword id="KW-1185">Reference proteome</keyword>
<keyword id="KW-0804">Transcription</keyword>
<keyword id="KW-0805">Transcription regulation</keyword>
<dbReference type="EMBL" id="AC018632">
    <property type="status" value="NOT_ANNOTATED_CDS"/>
    <property type="molecule type" value="Genomic_DNA"/>
</dbReference>
<dbReference type="EMBL" id="CP002688">
    <property type="protein sequence ID" value="AED93856.1"/>
    <property type="molecule type" value="Genomic_DNA"/>
</dbReference>
<dbReference type="EMBL" id="CP002688">
    <property type="protein sequence ID" value="AED93857.1"/>
    <property type="molecule type" value="Genomic_DNA"/>
</dbReference>
<dbReference type="EMBL" id="CP002688">
    <property type="protein sequence ID" value="AED93858.1"/>
    <property type="molecule type" value="Genomic_DNA"/>
</dbReference>
<dbReference type="EMBL" id="CP002688">
    <property type="protein sequence ID" value="AED93859.1"/>
    <property type="molecule type" value="Genomic_DNA"/>
</dbReference>
<dbReference type="EMBL" id="BT002344">
    <property type="protein sequence ID" value="AAN86177.1"/>
    <property type="molecule type" value="mRNA"/>
</dbReference>
<dbReference type="EMBL" id="AY085154">
    <property type="protein sequence ID" value="AAM61707.1"/>
    <property type="molecule type" value="mRNA"/>
</dbReference>
<dbReference type="RefSeq" id="NP_001078629.1">
    <molecule id="Q8GUN5-2"/>
    <property type="nucleotide sequence ID" value="NM_001085160.2"/>
</dbReference>
<dbReference type="RefSeq" id="NP_001119299.1">
    <molecule id="Q8GUN5-3"/>
    <property type="nucleotide sequence ID" value="NM_001125827.1"/>
</dbReference>
<dbReference type="RefSeq" id="NP_568512.3">
    <molecule id="Q8GUN5-1"/>
    <property type="nucleotide sequence ID" value="NM_122784.5"/>
</dbReference>
<dbReference type="RefSeq" id="NP_851090.1">
    <molecule id="Q8GUN5-2"/>
    <property type="nucleotide sequence ID" value="NM_180759.4"/>
</dbReference>
<dbReference type="SMR" id="Q8GUN5"/>
<dbReference type="BioGRID" id="18298">
    <property type="interactions" value="8"/>
</dbReference>
<dbReference type="DIP" id="DIP-60341N"/>
<dbReference type="FunCoup" id="Q8GUN5">
    <property type="interactions" value="25"/>
</dbReference>
<dbReference type="IntAct" id="Q8GUN5">
    <property type="interactions" value="2"/>
</dbReference>
<dbReference type="STRING" id="3702.Q8GUN5"/>
<dbReference type="PaxDb" id="3702-AT5G29000.2"/>
<dbReference type="ProteomicsDB" id="236144">
    <molecule id="Q8GUN5-1"/>
</dbReference>
<dbReference type="EnsemblPlants" id="AT5G29000.1">
    <molecule id="Q8GUN5-2"/>
    <property type="protein sequence ID" value="AT5G29000.1"/>
    <property type="gene ID" value="AT5G29000"/>
</dbReference>
<dbReference type="EnsemblPlants" id="AT5G29000.2">
    <molecule id="Q8GUN5-1"/>
    <property type="protein sequence ID" value="AT5G29000.2"/>
    <property type="gene ID" value="AT5G29000"/>
</dbReference>
<dbReference type="EnsemblPlants" id="AT5G29000.3">
    <molecule id="Q8GUN5-2"/>
    <property type="protein sequence ID" value="AT5G29000.3"/>
    <property type="gene ID" value="AT5G29000"/>
</dbReference>
<dbReference type="EnsemblPlants" id="AT5G29000.4">
    <molecule id="Q8GUN5-3"/>
    <property type="protein sequence ID" value="AT5G29000.4"/>
    <property type="gene ID" value="AT5G29000"/>
</dbReference>
<dbReference type="GeneID" id="833026"/>
<dbReference type="Gramene" id="AT5G29000.1">
    <molecule id="Q8GUN5-2"/>
    <property type="protein sequence ID" value="AT5G29000.1"/>
    <property type="gene ID" value="AT5G29000"/>
</dbReference>
<dbReference type="Gramene" id="AT5G29000.2">
    <molecule id="Q8GUN5-1"/>
    <property type="protein sequence ID" value="AT5G29000.2"/>
    <property type="gene ID" value="AT5G29000"/>
</dbReference>
<dbReference type="Gramene" id="AT5G29000.3">
    <molecule id="Q8GUN5-2"/>
    <property type="protein sequence ID" value="AT5G29000.3"/>
    <property type="gene ID" value="AT5G29000"/>
</dbReference>
<dbReference type="Gramene" id="AT5G29000.4">
    <molecule id="Q8GUN5-3"/>
    <property type="protein sequence ID" value="AT5G29000.4"/>
    <property type="gene ID" value="AT5G29000"/>
</dbReference>
<dbReference type="KEGG" id="ath:AT5G29000"/>
<dbReference type="Araport" id="AT5G29000"/>
<dbReference type="TAIR" id="AT5G29000">
    <property type="gene designation" value="PHL1"/>
</dbReference>
<dbReference type="eggNOG" id="ENOG502RQ9X">
    <property type="taxonomic scope" value="Eukaryota"/>
</dbReference>
<dbReference type="InParanoid" id="Q8GUN5"/>
<dbReference type="OMA" id="NWELPID"/>
<dbReference type="PhylomeDB" id="Q8GUN5"/>
<dbReference type="PRO" id="PR:Q8GUN5"/>
<dbReference type="Proteomes" id="UP000006548">
    <property type="component" value="Chromosome 5"/>
</dbReference>
<dbReference type="ExpressionAtlas" id="Q8GUN5">
    <property type="expression patterns" value="baseline and differential"/>
</dbReference>
<dbReference type="GO" id="GO:0005634">
    <property type="term" value="C:nucleus"/>
    <property type="evidence" value="ECO:0007669"/>
    <property type="project" value="UniProtKB-SubCell"/>
</dbReference>
<dbReference type="GO" id="GO:0003677">
    <property type="term" value="F:DNA binding"/>
    <property type="evidence" value="ECO:0007669"/>
    <property type="project" value="InterPro"/>
</dbReference>
<dbReference type="GO" id="GO:0003700">
    <property type="term" value="F:DNA-binding transcription factor activity"/>
    <property type="evidence" value="ECO:0000250"/>
    <property type="project" value="TAIR"/>
</dbReference>
<dbReference type="FunFam" id="1.10.10.60:FF:000002">
    <property type="entry name" value="Myb family transcription factor"/>
    <property type="match status" value="1"/>
</dbReference>
<dbReference type="Gene3D" id="1.10.10.60">
    <property type="entry name" value="Homeodomain-like"/>
    <property type="match status" value="1"/>
</dbReference>
<dbReference type="InterPro" id="IPR009057">
    <property type="entry name" value="Homeodomain-like_sf"/>
</dbReference>
<dbReference type="InterPro" id="IPR025756">
    <property type="entry name" value="Myb_CC_LHEQLE"/>
</dbReference>
<dbReference type="InterPro" id="IPR017930">
    <property type="entry name" value="Myb_dom"/>
</dbReference>
<dbReference type="InterPro" id="IPR006447">
    <property type="entry name" value="Myb_dom_plants"/>
</dbReference>
<dbReference type="InterPro" id="IPR046955">
    <property type="entry name" value="PHR1-like"/>
</dbReference>
<dbReference type="InterPro" id="IPR001005">
    <property type="entry name" value="SANT/Myb"/>
</dbReference>
<dbReference type="NCBIfam" id="TIGR01557">
    <property type="entry name" value="myb_SHAQKYF"/>
    <property type="match status" value="1"/>
</dbReference>
<dbReference type="PANTHER" id="PTHR31499:SF80">
    <property type="entry name" value="HTH MYB-TYPE DOMAIN-CONTAINING PROTEIN"/>
    <property type="match status" value="1"/>
</dbReference>
<dbReference type="PANTHER" id="PTHR31499">
    <property type="entry name" value="MYB FAMILY TRANSCRIPTION FACTOR PHL11"/>
    <property type="match status" value="1"/>
</dbReference>
<dbReference type="Pfam" id="PF14379">
    <property type="entry name" value="Myb_CC_LHEQLE"/>
    <property type="match status" value="1"/>
</dbReference>
<dbReference type="Pfam" id="PF00249">
    <property type="entry name" value="Myb_DNA-binding"/>
    <property type="match status" value="1"/>
</dbReference>
<dbReference type="SUPFAM" id="SSF46689">
    <property type="entry name" value="Homeodomain-like"/>
    <property type="match status" value="1"/>
</dbReference>
<dbReference type="PROSITE" id="PS51294">
    <property type="entry name" value="HTH_MYB"/>
    <property type="match status" value="1"/>
</dbReference>
<comment type="function">
    <text evidence="3 6">Transcription factor acting as central integrator of phosphate starvation responses (PubMed:20838596). Regulates FER1 expression upon phosphate starvation, linking iron and phosphate homeostasis (PubMed:23788639).</text>
</comment>
<comment type="subunit">
    <text evidence="3 4 5 7">Homodimers and heterodimers (PubMed:20838596). Interacts with MED25 (PubMed:21343311, PubMed:21536906). Does not interact with PHL2 or PHL3 (PubMed:26586833).</text>
</comment>
<comment type="interaction">
    <interactant intactId="EBI-15924466">
        <id>Q8GUN5-2</id>
    </interactant>
    <interactant intactId="EBI-15924435">
        <id>Q7XYY2-1</id>
        <label>MED25</label>
    </interactant>
    <organismsDiffer>false</organismsDiffer>
    <experiments>2</experiments>
</comment>
<comment type="subcellular location">
    <subcellularLocation>
        <location evidence="8">Nucleus</location>
    </subcellularLocation>
</comment>
<comment type="alternative products">
    <event type="alternative splicing"/>
    <isoform>
        <id>Q8GUN5-1</id>
        <name>1</name>
        <sequence type="displayed"/>
    </isoform>
    <isoform>
        <id>Q8GUN5-2</id>
        <name>2</name>
        <sequence type="described" ref="VSP_043994"/>
    </isoform>
    <isoform>
        <id>Q8GUN5-3</id>
        <name>3</name>
        <sequence type="described" ref="VSP_043995 VSP_043996"/>
    </isoform>
</comment>
<comment type="tissue specificity">
    <text evidence="3">Expressed in shoots and roots.</text>
</comment>
<comment type="induction">
    <text evidence="7">Not up-regulated by Pi starvation.</text>
</comment>
<comment type="disruption phenotype">
    <text evidence="3">No effect on phosphate starvation responsiveness, due to the redundancy with PHR1.</text>
</comment>
<comment type="similarity">
    <text evidence="8">Belongs to the MYB-CC family.</text>
</comment>
<organism>
    <name type="scientific">Arabidopsis thaliana</name>
    <name type="common">Mouse-ear cress</name>
    <dbReference type="NCBI Taxonomy" id="3702"/>
    <lineage>
        <taxon>Eukaryota</taxon>
        <taxon>Viridiplantae</taxon>
        <taxon>Streptophyta</taxon>
        <taxon>Embryophyta</taxon>
        <taxon>Tracheophyta</taxon>
        <taxon>Spermatophyta</taxon>
        <taxon>Magnoliopsida</taxon>
        <taxon>eudicotyledons</taxon>
        <taxon>Gunneridae</taxon>
        <taxon>Pentapetalae</taxon>
        <taxon>rosids</taxon>
        <taxon>malvids</taxon>
        <taxon>Brassicales</taxon>
        <taxon>Brassicaceae</taxon>
        <taxon>Camelineae</taxon>
        <taxon>Arabidopsis</taxon>
    </lineage>
</organism>
<feature type="chain" id="PRO_0000418125" description="Protein PHR1-LIKE 1">
    <location>
        <begin position="1"/>
        <end position="413"/>
    </location>
</feature>
<feature type="domain" description="HTH myb-type" evidence="1">
    <location>
        <begin position="228"/>
        <end position="288"/>
    </location>
</feature>
<feature type="DNA-binding region" description="H-T-H motif" evidence="1">
    <location>
        <begin position="259"/>
        <end position="284"/>
    </location>
</feature>
<feature type="region of interest" description="Disordered" evidence="2">
    <location>
        <begin position="171"/>
        <end position="196"/>
    </location>
</feature>
<feature type="region of interest" description="Disordered" evidence="2">
    <location>
        <begin position="208"/>
        <end position="233"/>
    </location>
</feature>
<feature type="region of interest" description="Coiled coil" evidence="8">
    <location>
        <begin position="322"/>
        <end position="342"/>
    </location>
</feature>
<feature type="region of interest" description="Disordered" evidence="2">
    <location>
        <begin position="363"/>
        <end position="413"/>
    </location>
</feature>
<feature type="short sequence motif" description="LHEQLE" evidence="8">
    <location>
        <begin position="335"/>
        <end position="340"/>
    </location>
</feature>
<feature type="compositionally biased region" description="Polar residues" evidence="2">
    <location>
        <begin position="181"/>
        <end position="191"/>
    </location>
</feature>
<feature type="compositionally biased region" description="Polar residues" evidence="2">
    <location>
        <begin position="208"/>
        <end position="231"/>
    </location>
</feature>
<feature type="compositionally biased region" description="Polar residues" evidence="2">
    <location>
        <begin position="369"/>
        <end position="383"/>
    </location>
</feature>
<feature type="compositionally biased region" description="Polar residues" evidence="2">
    <location>
        <begin position="396"/>
        <end position="405"/>
    </location>
</feature>
<feature type="splice variant" id="VSP_043994" description="In isoform 2." evidence="8">
    <location>
        <begin position="1"/>
        <end position="43"/>
    </location>
</feature>
<feature type="splice variant" id="VSP_043995" description="In isoform 3." evidence="8">
    <original>EPQEKKMTSIEDIK</original>
    <variation>KELKYFNIILLHFF</variation>
    <location>
        <begin position="298"/>
        <end position="311"/>
    </location>
</feature>
<feature type="splice variant" id="VSP_043996" description="In isoform 3." evidence="8">
    <location>
        <begin position="312"/>
        <end position="413"/>
    </location>
</feature>
<feature type="sequence conflict" description="In Ref. 4; AAM61707." evidence="8" ref="4">
    <original>D</original>
    <variation>H</variation>
    <location>
        <position position="26"/>
    </location>
</feature>
<gene>
    <name type="primary">PHL1</name>
    <name type="ordered locus">At5g29000</name>
    <name type="ORF">F3F24.100</name>
</gene>
<proteinExistence type="evidence at protein level"/>
<protein>
    <recommendedName>
        <fullName>Protein PHR1-LIKE 1</fullName>
    </recommendedName>
    <alternativeName>
        <fullName>Myb-like transcription factor 1</fullName>
    </alternativeName>
</protein>
<sequence>MTLANDFGYSTAMSSSYSALHTSVEDRYHKLPNSFWVSSGQELMNNPVPCQSVSGGNSGGYLFPSSSGYCNVSAVLPHGRNLQNQPPVSTVPRDRLAMQDCPLIAQSSLINHHPQEFIDPLHEFFDFSDHVPVQNLQAESSGVRVDSSVELHKKSEWQDWADQLISVDDGSEPNWSELLGDSSSHNPNSEIPTPFLDVPRLDITANQQQQMVSSEDQLSGRNSSSSVATSKQRMRWTPELHEAFVEAVNQLGGSERATPKAVLKLLNNPGLTIYHVKSHLQKYRTARYKPETSEVTGEPQEKKMTSIEDIKSLDMKTSVEITQALRLQMEVQKRLHEQLEIQRSLQLQIEKQGRYLQMMFEKQQKIQDNKSSSSEASPKQCNGSFAEVEVGLETLTGDQNESASASRKRVRED</sequence>
<evidence type="ECO:0000255" key="1">
    <source>
        <dbReference type="PROSITE-ProRule" id="PRU00625"/>
    </source>
</evidence>
<evidence type="ECO:0000256" key="2">
    <source>
        <dbReference type="SAM" id="MobiDB-lite"/>
    </source>
</evidence>
<evidence type="ECO:0000269" key="3">
    <source>
    </source>
</evidence>
<evidence type="ECO:0000269" key="4">
    <source>
    </source>
</evidence>
<evidence type="ECO:0000269" key="5">
    <source>
    </source>
</evidence>
<evidence type="ECO:0000269" key="6">
    <source>
    </source>
</evidence>
<evidence type="ECO:0000269" key="7">
    <source>
    </source>
</evidence>
<evidence type="ECO:0000305" key="8"/>